<evidence type="ECO:0000250" key="1"/>
<evidence type="ECO:0000250" key="2">
    <source>
        <dbReference type="UniProtKB" id="Q810B3"/>
    </source>
</evidence>
<evidence type="ECO:0000255" key="3"/>
<evidence type="ECO:0000255" key="4">
    <source>
        <dbReference type="PROSITE-ProRule" id="PRU00108"/>
    </source>
</evidence>
<evidence type="ECO:0000256" key="5">
    <source>
        <dbReference type="SAM" id="MobiDB-lite"/>
    </source>
</evidence>
<evidence type="ECO:0000269" key="6">
    <source ref="1"/>
</evidence>
<evidence type="ECO:0000312" key="7">
    <source>
        <dbReference type="EMBL" id="AAR99056.1"/>
    </source>
</evidence>
<organism>
    <name type="scientific">Danio rerio</name>
    <name type="common">Zebrafish</name>
    <name type="synonym">Brachydanio rerio</name>
    <dbReference type="NCBI Taxonomy" id="7955"/>
    <lineage>
        <taxon>Eukaryota</taxon>
        <taxon>Metazoa</taxon>
        <taxon>Chordata</taxon>
        <taxon>Craniata</taxon>
        <taxon>Vertebrata</taxon>
        <taxon>Euteleostomi</taxon>
        <taxon>Actinopterygii</taxon>
        <taxon>Neopterygii</taxon>
        <taxon>Teleostei</taxon>
        <taxon>Ostariophysi</taxon>
        <taxon>Cypriniformes</taxon>
        <taxon>Danionidae</taxon>
        <taxon>Danioninae</taxon>
        <taxon>Danio</taxon>
    </lineage>
</organism>
<sequence>MNLNYTSPVPQMPTQRSTSFFIEDILLHKPKPLREVFPSPFSNSIASRMPLLEYGYPLMPTPILAPHPHHPLHKPEHHPYFFTSGMQMPALFQHHPELPGKHCRRRKARTVFSDSQLSGLEKRFEIQRYLSTPERVELATALSLSETQVKTWFQNRRMKHKKQLRKTQDDQKTPNDVDRSLENTSESEMHEKNTDGKNGMSPDRYTLDDNEDDVDIEDDICSPEHLL</sequence>
<keyword id="KW-0010">Activator</keyword>
<keyword id="KW-0238">DNA-binding</keyword>
<keyword id="KW-0371">Homeobox</keyword>
<keyword id="KW-0539">Nucleus</keyword>
<keyword id="KW-1185">Reference proteome</keyword>
<keyword id="KW-0804">Transcription</keyword>
<keyword id="KW-0805">Transcription regulation</keyword>
<reference evidence="7" key="1">
    <citation type="submission" date="2003-12" db="EMBL/GenBank/DDBJ databases">
        <title>Identification of vertebrate homologs of the Drosophila brain-specific homeobox gene.</title>
        <authorList>
            <person name="Assimacopoulos S."/>
            <person name="Ragsdale C.W."/>
        </authorList>
    </citation>
    <scope>NUCLEOTIDE SEQUENCE [MRNA]</scope>
    <source>
        <tissue evidence="6">Embryo</tissue>
    </source>
</reference>
<proteinExistence type="evidence at transcript level"/>
<comment type="function">
    <text evidence="1">DNA binding protein that function as transcriptional activator. May play a role in the determination and function of cell types in the brain.</text>
</comment>
<comment type="subcellular location">
    <subcellularLocation>
        <location evidence="2">Nucleus</location>
    </subcellularLocation>
</comment>
<comment type="similarity">
    <text evidence="3">Belongs to the distal-less homeobox family.</text>
</comment>
<protein>
    <recommendedName>
        <fullName>Brain-specific homeobox protein homolog</fullName>
    </recommendedName>
</protein>
<gene>
    <name evidence="7" type="primary">bsx</name>
</gene>
<feature type="chain" id="PRO_0000048842" description="Brain-specific homeobox protein homolog">
    <location>
        <begin position="1"/>
        <end position="227"/>
    </location>
</feature>
<feature type="DNA-binding region" description="Homeobox" evidence="4">
    <location>
        <begin position="103"/>
        <end position="163"/>
    </location>
</feature>
<feature type="region of interest" description="Disordered" evidence="5">
    <location>
        <begin position="157"/>
        <end position="227"/>
    </location>
</feature>
<feature type="compositionally biased region" description="Basic and acidic residues" evidence="5">
    <location>
        <begin position="166"/>
        <end position="195"/>
    </location>
</feature>
<feature type="compositionally biased region" description="Acidic residues" evidence="5">
    <location>
        <begin position="208"/>
        <end position="221"/>
    </location>
</feature>
<dbReference type="EMBL" id="AY515251">
    <property type="protein sequence ID" value="AAR99056.1"/>
    <property type="molecule type" value="mRNA"/>
</dbReference>
<dbReference type="RefSeq" id="NP_999892.1">
    <property type="nucleotide sequence ID" value="NM_214727.1"/>
</dbReference>
<dbReference type="SMR" id="Q6R3Q6"/>
<dbReference type="FunCoup" id="Q6R3Q6">
    <property type="interactions" value="18"/>
</dbReference>
<dbReference type="STRING" id="7955.ENSDARP00000090755"/>
<dbReference type="PaxDb" id="7955-ENSDARP00000090755"/>
<dbReference type="Ensembl" id="ENSDART00000099983">
    <property type="protein sequence ID" value="ENSDARP00000090755"/>
    <property type="gene ID" value="ENSDARG00000068976"/>
</dbReference>
<dbReference type="Ensembl" id="ENSDART00000185401">
    <property type="protein sequence ID" value="ENSDARP00000149609"/>
    <property type="gene ID" value="ENSDARG00000110782"/>
</dbReference>
<dbReference type="GeneID" id="573364"/>
<dbReference type="KEGG" id="dre:573364"/>
<dbReference type="AGR" id="ZFIN:ZDB-GENE-040628-4"/>
<dbReference type="CTD" id="390259"/>
<dbReference type="ZFIN" id="ZDB-GENE-040628-4">
    <property type="gene designation" value="bsx"/>
</dbReference>
<dbReference type="eggNOG" id="KOG0491">
    <property type="taxonomic scope" value="Eukaryota"/>
</dbReference>
<dbReference type="HOGENOM" id="CLU_104234_0_0_1"/>
<dbReference type="InParanoid" id="Q6R3Q6"/>
<dbReference type="OMA" id="DLPGKHC"/>
<dbReference type="OrthoDB" id="6159439at2759"/>
<dbReference type="PhylomeDB" id="Q6R3Q6"/>
<dbReference type="PRO" id="PR:Q6R3Q6"/>
<dbReference type="Proteomes" id="UP000000437">
    <property type="component" value="Alternate scaffold 10"/>
</dbReference>
<dbReference type="Proteomes" id="UP000000437">
    <property type="component" value="Chromosome 10"/>
</dbReference>
<dbReference type="Bgee" id="ENSDARG00000068976">
    <property type="expression patterns" value="Expressed in brain and 5 other cell types or tissues"/>
</dbReference>
<dbReference type="ExpressionAtlas" id="Q6R3Q6">
    <property type="expression patterns" value="baseline"/>
</dbReference>
<dbReference type="GO" id="GO:0005634">
    <property type="term" value="C:nucleus"/>
    <property type="evidence" value="ECO:0007669"/>
    <property type="project" value="UniProtKB-SubCell"/>
</dbReference>
<dbReference type="GO" id="GO:0000981">
    <property type="term" value="F:DNA-binding transcription factor activity, RNA polymerase II-specific"/>
    <property type="evidence" value="ECO:0000318"/>
    <property type="project" value="GO_Central"/>
</dbReference>
<dbReference type="GO" id="GO:0000978">
    <property type="term" value="F:RNA polymerase II cis-regulatory region sequence-specific DNA binding"/>
    <property type="evidence" value="ECO:0000318"/>
    <property type="project" value="GO_Central"/>
</dbReference>
<dbReference type="GO" id="GO:0007420">
    <property type="term" value="P:brain development"/>
    <property type="evidence" value="ECO:0000250"/>
    <property type="project" value="UniProtKB"/>
</dbReference>
<dbReference type="GO" id="GO:0030154">
    <property type="term" value="P:cell differentiation"/>
    <property type="evidence" value="ECO:0000318"/>
    <property type="project" value="GO_Central"/>
</dbReference>
<dbReference type="GO" id="GO:0021982">
    <property type="term" value="P:pineal gland development"/>
    <property type="evidence" value="ECO:0000315"/>
    <property type="project" value="ZFIN"/>
</dbReference>
<dbReference type="GO" id="GO:0006357">
    <property type="term" value="P:regulation of transcription by RNA polymerase II"/>
    <property type="evidence" value="ECO:0000318"/>
    <property type="project" value="GO_Central"/>
</dbReference>
<dbReference type="GO" id="GO:0019827">
    <property type="term" value="P:stem cell population maintenance"/>
    <property type="evidence" value="ECO:0000318"/>
    <property type="project" value="GO_Central"/>
</dbReference>
<dbReference type="CDD" id="cd00086">
    <property type="entry name" value="homeodomain"/>
    <property type="match status" value="1"/>
</dbReference>
<dbReference type="FunFam" id="1.10.10.60:FF:000173">
    <property type="entry name" value="brain-specific homeobox protein homolog"/>
    <property type="match status" value="1"/>
</dbReference>
<dbReference type="Gene3D" id="1.10.10.60">
    <property type="entry name" value="Homeodomain-like"/>
    <property type="match status" value="1"/>
</dbReference>
<dbReference type="InterPro" id="IPR001356">
    <property type="entry name" value="HD"/>
</dbReference>
<dbReference type="InterPro" id="IPR020479">
    <property type="entry name" value="HD_metazoa"/>
</dbReference>
<dbReference type="InterPro" id="IPR017970">
    <property type="entry name" value="Homeobox_CS"/>
</dbReference>
<dbReference type="InterPro" id="IPR050848">
    <property type="entry name" value="Homeobox_TF"/>
</dbReference>
<dbReference type="InterPro" id="IPR009057">
    <property type="entry name" value="Homeodomain-like_sf"/>
</dbReference>
<dbReference type="PANTHER" id="PTHR24333:SF16">
    <property type="entry name" value="BRAIN-SPECIFIC HOMEOBOX"/>
    <property type="match status" value="1"/>
</dbReference>
<dbReference type="PANTHER" id="PTHR24333">
    <property type="entry name" value="HOMEO BOX HB9 LIKE A-RELATED"/>
    <property type="match status" value="1"/>
</dbReference>
<dbReference type="Pfam" id="PF00046">
    <property type="entry name" value="Homeodomain"/>
    <property type="match status" value="1"/>
</dbReference>
<dbReference type="PRINTS" id="PR00024">
    <property type="entry name" value="HOMEOBOX"/>
</dbReference>
<dbReference type="SMART" id="SM00389">
    <property type="entry name" value="HOX"/>
    <property type="match status" value="1"/>
</dbReference>
<dbReference type="SUPFAM" id="SSF46689">
    <property type="entry name" value="Homeodomain-like"/>
    <property type="match status" value="1"/>
</dbReference>
<dbReference type="PROSITE" id="PS00027">
    <property type="entry name" value="HOMEOBOX_1"/>
    <property type="match status" value="1"/>
</dbReference>
<dbReference type="PROSITE" id="PS50071">
    <property type="entry name" value="HOMEOBOX_2"/>
    <property type="match status" value="1"/>
</dbReference>
<name>BSH_DANRE</name>
<accession>Q6R3Q6</accession>